<dbReference type="EC" id="2.7.7.7" evidence="1"/>
<dbReference type="EMBL" id="CP000627">
    <property type="protein sequence ID" value="ABQ20576.1"/>
    <property type="molecule type" value="Genomic_DNA"/>
</dbReference>
<dbReference type="EMBL" id="CP001235">
    <property type="protein sequence ID" value="ACP10393.1"/>
    <property type="molecule type" value="Genomic_DNA"/>
</dbReference>
<dbReference type="RefSeq" id="WP_001153987.1">
    <property type="nucleotide sequence ID" value="NZ_JAACZH010000008.1"/>
</dbReference>
<dbReference type="SMR" id="A5F5Y1"/>
<dbReference type="KEGG" id="vco:VC0395_A1876"/>
<dbReference type="KEGG" id="vcr:VC395_2403"/>
<dbReference type="PATRIC" id="fig|345073.21.peg.2316"/>
<dbReference type="eggNOG" id="COG0389">
    <property type="taxonomic scope" value="Bacteria"/>
</dbReference>
<dbReference type="HOGENOM" id="CLU_012348_1_2_6"/>
<dbReference type="OrthoDB" id="9808813at2"/>
<dbReference type="Proteomes" id="UP000000249">
    <property type="component" value="Chromosome 2"/>
</dbReference>
<dbReference type="GO" id="GO:0005829">
    <property type="term" value="C:cytosol"/>
    <property type="evidence" value="ECO:0007669"/>
    <property type="project" value="TreeGrafter"/>
</dbReference>
<dbReference type="GO" id="GO:0003684">
    <property type="term" value="F:damaged DNA binding"/>
    <property type="evidence" value="ECO:0007669"/>
    <property type="project" value="InterPro"/>
</dbReference>
<dbReference type="GO" id="GO:0003887">
    <property type="term" value="F:DNA-directed DNA polymerase activity"/>
    <property type="evidence" value="ECO:0007669"/>
    <property type="project" value="UniProtKB-UniRule"/>
</dbReference>
<dbReference type="GO" id="GO:0000287">
    <property type="term" value="F:magnesium ion binding"/>
    <property type="evidence" value="ECO:0007669"/>
    <property type="project" value="UniProtKB-UniRule"/>
</dbReference>
<dbReference type="GO" id="GO:0006261">
    <property type="term" value="P:DNA-templated DNA replication"/>
    <property type="evidence" value="ECO:0007669"/>
    <property type="project" value="UniProtKB-UniRule"/>
</dbReference>
<dbReference type="GO" id="GO:0042276">
    <property type="term" value="P:error-prone translesion synthesis"/>
    <property type="evidence" value="ECO:0007669"/>
    <property type="project" value="TreeGrafter"/>
</dbReference>
<dbReference type="GO" id="GO:0009432">
    <property type="term" value="P:SOS response"/>
    <property type="evidence" value="ECO:0007669"/>
    <property type="project" value="TreeGrafter"/>
</dbReference>
<dbReference type="CDD" id="cd03586">
    <property type="entry name" value="PolY_Pol_IV_kappa"/>
    <property type="match status" value="1"/>
</dbReference>
<dbReference type="FunFam" id="3.30.1490.100:FF:000002">
    <property type="entry name" value="DNA polymerase IV"/>
    <property type="match status" value="1"/>
</dbReference>
<dbReference type="FunFam" id="3.30.70.270:FF:000002">
    <property type="entry name" value="DNA polymerase IV"/>
    <property type="match status" value="1"/>
</dbReference>
<dbReference type="FunFam" id="3.40.1170.60:FF:000001">
    <property type="entry name" value="DNA polymerase IV"/>
    <property type="match status" value="1"/>
</dbReference>
<dbReference type="Gene3D" id="3.30.70.270">
    <property type="match status" value="1"/>
</dbReference>
<dbReference type="Gene3D" id="3.40.1170.60">
    <property type="match status" value="1"/>
</dbReference>
<dbReference type="Gene3D" id="1.10.150.20">
    <property type="entry name" value="5' to 3' exonuclease, C-terminal subdomain"/>
    <property type="match status" value="1"/>
</dbReference>
<dbReference type="Gene3D" id="3.30.1490.100">
    <property type="entry name" value="DNA polymerase, Y-family, little finger domain"/>
    <property type="match status" value="1"/>
</dbReference>
<dbReference type="HAMAP" id="MF_01113">
    <property type="entry name" value="DNApol_IV"/>
    <property type="match status" value="1"/>
</dbReference>
<dbReference type="InterPro" id="IPR043502">
    <property type="entry name" value="DNA/RNA_pol_sf"/>
</dbReference>
<dbReference type="InterPro" id="IPR036775">
    <property type="entry name" value="DNA_pol_Y-fam_lit_finger_sf"/>
</dbReference>
<dbReference type="InterPro" id="IPR017961">
    <property type="entry name" value="DNA_pol_Y-fam_little_finger"/>
</dbReference>
<dbReference type="InterPro" id="IPR050116">
    <property type="entry name" value="DNA_polymerase-Y"/>
</dbReference>
<dbReference type="InterPro" id="IPR022880">
    <property type="entry name" value="DNApol_IV"/>
</dbReference>
<dbReference type="InterPro" id="IPR024728">
    <property type="entry name" value="PolY_HhH_motif"/>
</dbReference>
<dbReference type="InterPro" id="IPR043128">
    <property type="entry name" value="Rev_trsase/Diguanyl_cyclase"/>
</dbReference>
<dbReference type="InterPro" id="IPR001126">
    <property type="entry name" value="UmuC"/>
</dbReference>
<dbReference type="NCBIfam" id="NF002677">
    <property type="entry name" value="PRK02406.1"/>
    <property type="match status" value="1"/>
</dbReference>
<dbReference type="PANTHER" id="PTHR11076:SF33">
    <property type="entry name" value="DNA POLYMERASE KAPPA"/>
    <property type="match status" value="1"/>
</dbReference>
<dbReference type="PANTHER" id="PTHR11076">
    <property type="entry name" value="DNA REPAIR POLYMERASE UMUC / TRANSFERASE FAMILY MEMBER"/>
    <property type="match status" value="1"/>
</dbReference>
<dbReference type="Pfam" id="PF00817">
    <property type="entry name" value="IMS"/>
    <property type="match status" value="1"/>
</dbReference>
<dbReference type="Pfam" id="PF11799">
    <property type="entry name" value="IMS_C"/>
    <property type="match status" value="1"/>
</dbReference>
<dbReference type="Pfam" id="PF11798">
    <property type="entry name" value="IMS_HHH"/>
    <property type="match status" value="1"/>
</dbReference>
<dbReference type="SUPFAM" id="SSF56672">
    <property type="entry name" value="DNA/RNA polymerases"/>
    <property type="match status" value="1"/>
</dbReference>
<dbReference type="SUPFAM" id="SSF100879">
    <property type="entry name" value="Lesion bypass DNA polymerase (Y-family), little finger domain"/>
    <property type="match status" value="1"/>
</dbReference>
<dbReference type="PROSITE" id="PS50173">
    <property type="entry name" value="UMUC"/>
    <property type="match status" value="1"/>
</dbReference>
<organism>
    <name type="scientific">Vibrio cholerae serotype O1 (strain ATCC 39541 / Classical Ogawa 395 / O395)</name>
    <dbReference type="NCBI Taxonomy" id="345073"/>
    <lineage>
        <taxon>Bacteria</taxon>
        <taxon>Pseudomonadati</taxon>
        <taxon>Pseudomonadota</taxon>
        <taxon>Gammaproteobacteria</taxon>
        <taxon>Vibrionales</taxon>
        <taxon>Vibrionaceae</taxon>
        <taxon>Vibrio</taxon>
    </lineage>
</organism>
<proteinExistence type="inferred from homology"/>
<evidence type="ECO:0000255" key="1">
    <source>
        <dbReference type="HAMAP-Rule" id="MF_01113"/>
    </source>
</evidence>
<gene>
    <name evidence="1" type="primary">dinB</name>
    <name type="synonym">dinP</name>
    <name type="ordered locus">VC0395_A1876</name>
    <name type="ordered locus">VC395_2403</name>
</gene>
<keyword id="KW-0963">Cytoplasm</keyword>
<keyword id="KW-0227">DNA damage</keyword>
<keyword id="KW-0234">DNA repair</keyword>
<keyword id="KW-0235">DNA replication</keyword>
<keyword id="KW-0238">DNA-binding</keyword>
<keyword id="KW-0239">DNA-directed DNA polymerase</keyword>
<keyword id="KW-0460">Magnesium</keyword>
<keyword id="KW-0479">Metal-binding</keyword>
<keyword id="KW-0515">Mutator protein</keyword>
<keyword id="KW-0548">Nucleotidyltransferase</keyword>
<keyword id="KW-0808">Transferase</keyword>
<sequence>MQDRIRKIIHVDMDCFFAAVEMRDNPAYREIALAVGGHEKQRGVISTCNYQARKFGVRSAMPTAQALKLCPQLHVVPGRMSVYKSVSQQIQTIFQRYTSLIEPLSLDEAYLDVSESTAYQGSATLIAQAIRRDIWQELNLTASAGVAPIKFLAKVASDLNKPNGLYVVTPDKVQEMVDSLPLEKIPGVGKVALEKLHQAGLYVGADVRRADYRKLLHQFGRLGASLWKKSHGIDEREVVTERERKSVGVEYTFSQNISTFQECWQVIEQKLYPELDARLSRAHPQRGIIKQGIKVKFADFQQTTIEHVHPALELDYFHELLEQVLTRQQGREIRLLGLSVMLKPELQMKQLSMFPSDGWQ</sequence>
<comment type="function">
    <text evidence="1">Poorly processive, error-prone DNA polymerase involved in untargeted mutagenesis. Copies undamaged DNA at stalled replication forks, which arise in vivo from mismatched or misaligned primer ends. These misaligned primers can be extended by PolIV. Exhibits no 3'-5' exonuclease (proofreading) activity. May be involved in translesional synthesis, in conjunction with the beta clamp from PolIII.</text>
</comment>
<comment type="catalytic activity">
    <reaction evidence="1">
        <text>DNA(n) + a 2'-deoxyribonucleoside 5'-triphosphate = DNA(n+1) + diphosphate</text>
        <dbReference type="Rhea" id="RHEA:22508"/>
        <dbReference type="Rhea" id="RHEA-COMP:17339"/>
        <dbReference type="Rhea" id="RHEA-COMP:17340"/>
        <dbReference type="ChEBI" id="CHEBI:33019"/>
        <dbReference type="ChEBI" id="CHEBI:61560"/>
        <dbReference type="ChEBI" id="CHEBI:173112"/>
        <dbReference type="EC" id="2.7.7.7"/>
    </reaction>
</comment>
<comment type="cofactor">
    <cofactor evidence="1">
        <name>Mg(2+)</name>
        <dbReference type="ChEBI" id="CHEBI:18420"/>
    </cofactor>
    <text evidence="1">Binds 2 magnesium ions per subunit.</text>
</comment>
<comment type="subunit">
    <text evidence="1">Monomer.</text>
</comment>
<comment type="subcellular location">
    <subcellularLocation>
        <location evidence="1">Cytoplasm</location>
    </subcellularLocation>
</comment>
<comment type="similarity">
    <text evidence="1">Belongs to the DNA polymerase type-Y family.</text>
</comment>
<reference key="1">
    <citation type="submission" date="2007-03" db="EMBL/GenBank/DDBJ databases">
        <authorList>
            <person name="Heidelberg J."/>
        </authorList>
    </citation>
    <scope>NUCLEOTIDE SEQUENCE [LARGE SCALE GENOMIC DNA]</scope>
    <source>
        <strain>ATCC 39541 / Classical Ogawa 395 / O395</strain>
    </source>
</reference>
<reference key="2">
    <citation type="journal article" date="2008" name="PLoS ONE">
        <title>A recalibrated molecular clock and independent origins for the cholera pandemic clones.</title>
        <authorList>
            <person name="Feng L."/>
            <person name="Reeves P.R."/>
            <person name="Lan R."/>
            <person name="Ren Y."/>
            <person name="Gao C."/>
            <person name="Zhou Z."/>
            <person name="Ren Y."/>
            <person name="Cheng J."/>
            <person name="Wang W."/>
            <person name="Wang J."/>
            <person name="Qian W."/>
            <person name="Li D."/>
            <person name="Wang L."/>
        </authorList>
    </citation>
    <scope>NUCLEOTIDE SEQUENCE [LARGE SCALE GENOMIC DNA]</scope>
    <source>
        <strain>ATCC 39541 / Classical Ogawa 395 / O395</strain>
    </source>
</reference>
<accession>A5F5Y1</accession>
<accession>C3M411</accession>
<protein>
    <recommendedName>
        <fullName evidence="1">DNA polymerase IV</fullName>
        <shortName evidence="1">Pol IV</shortName>
        <ecNumber evidence="1">2.7.7.7</ecNumber>
    </recommendedName>
</protein>
<feature type="chain" id="PRO_1000084967" description="DNA polymerase IV">
    <location>
        <begin position="1"/>
        <end position="360"/>
    </location>
</feature>
<feature type="domain" description="UmuC" evidence="1">
    <location>
        <begin position="8"/>
        <end position="189"/>
    </location>
</feature>
<feature type="active site" evidence="1">
    <location>
        <position position="108"/>
    </location>
</feature>
<feature type="binding site" evidence="1">
    <location>
        <position position="12"/>
    </location>
    <ligand>
        <name>Mg(2+)</name>
        <dbReference type="ChEBI" id="CHEBI:18420"/>
    </ligand>
</feature>
<feature type="binding site" evidence="1">
    <location>
        <position position="107"/>
    </location>
    <ligand>
        <name>Mg(2+)</name>
        <dbReference type="ChEBI" id="CHEBI:18420"/>
    </ligand>
</feature>
<feature type="site" description="Substrate discrimination" evidence="1">
    <location>
        <position position="17"/>
    </location>
</feature>
<name>DPO4_VIBC3</name>